<comment type="catalytic activity">
    <reaction evidence="3">
        <text>S-ubiquitinyl-[E2 ubiquitin-conjugating enzyme]-L-cysteine + [acceptor protein]-L-lysine = [E2 ubiquitin-conjugating enzyme]-L-cysteine + N(6)-ubiquitinyl-[acceptor protein]-L-lysine.</text>
        <dbReference type="EC" id="2.3.2.27"/>
    </reaction>
</comment>
<comment type="pathway">
    <text>Protein modification; protein ubiquitination.</text>
</comment>
<comment type="domain">
    <text>The RING-type zinc finger domain mediates binding to an E2 ubiquitin-conjugating enzyme.</text>
</comment>
<comment type="similarity">
    <text evidence="3">Belongs to the RING-type zinc finger family.</text>
</comment>
<protein>
    <recommendedName>
        <fullName>Probable E3 ubiquitin-protein ligase BAH1-like 1</fullName>
        <ecNumber evidence="3">2.3.2.27</ecNumber>
    </recommendedName>
    <alternativeName>
        <fullName evidence="3">RING-type E3 ubiquitin transferase BAH1-like 1</fullName>
    </alternativeName>
</protein>
<sequence>MKFGAIYEEYLREQQDKYLTKCSHVEYKRLKKVLKKCRVGRSLQEDCPNGDQQEGNNESPDICKCNSCTLCDQMFFTELTKEASEIAGCFSSRVQRLLNLHVPSGFLRYIWRVRQCFIDDQQIMVQEGRMLLNYVTMNAIAIRKILKKYDKIHGSVSGRDFKSKMQTDHIELLQSPWLIELGAFHLNCNSSDIDETVGFLKNEFFKNFSCDLTEARPLMTMAISETMKYEYSLTCPICLDTLFNPYALSCGHLFCKGCACGAASVYIFQGVKSAPPEAKCPVCRSDGVFAHAVHMTELDLLIKTRSKDYWRQRLREERNEMVKQSKEYWDSQAMLSMGI</sequence>
<organism>
    <name type="scientific">Oryza sativa subsp. japonica</name>
    <name type="common">Rice</name>
    <dbReference type="NCBI Taxonomy" id="39947"/>
    <lineage>
        <taxon>Eukaryota</taxon>
        <taxon>Viridiplantae</taxon>
        <taxon>Streptophyta</taxon>
        <taxon>Embryophyta</taxon>
        <taxon>Tracheophyta</taxon>
        <taxon>Spermatophyta</taxon>
        <taxon>Magnoliopsida</taxon>
        <taxon>Liliopsida</taxon>
        <taxon>Poales</taxon>
        <taxon>Poaceae</taxon>
        <taxon>BOP clade</taxon>
        <taxon>Oryzoideae</taxon>
        <taxon>Oryzeae</taxon>
        <taxon>Oryzinae</taxon>
        <taxon>Oryza</taxon>
        <taxon>Oryza sativa</taxon>
    </lineage>
</organism>
<keyword id="KW-0479">Metal-binding</keyword>
<keyword id="KW-1185">Reference proteome</keyword>
<keyword id="KW-0808">Transferase</keyword>
<keyword id="KW-0833">Ubl conjugation pathway</keyword>
<keyword id="KW-0862">Zinc</keyword>
<keyword id="KW-0863">Zinc-finger</keyword>
<name>BAHL1_ORYSJ</name>
<reference key="1">
    <citation type="journal article" date="2005" name="Genome Res.">
        <title>Sequence, annotation, and analysis of synteny between rice chromosome 3 and diverged grass species.</title>
        <authorList>
            <consortium name="The rice chromosome 3 sequencing consortium"/>
            <person name="Buell C.R."/>
            <person name="Yuan Q."/>
            <person name="Ouyang S."/>
            <person name="Liu J."/>
            <person name="Zhu W."/>
            <person name="Wang A."/>
            <person name="Maiti R."/>
            <person name="Haas B."/>
            <person name="Wortman J."/>
            <person name="Pertea M."/>
            <person name="Jones K.M."/>
            <person name="Kim M."/>
            <person name="Overton L."/>
            <person name="Tsitrin T."/>
            <person name="Fadrosh D."/>
            <person name="Bera J."/>
            <person name="Weaver B."/>
            <person name="Jin S."/>
            <person name="Johri S."/>
            <person name="Reardon M."/>
            <person name="Webb K."/>
            <person name="Hill J."/>
            <person name="Moffat K."/>
            <person name="Tallon L."/>
            <person name="Van Aken S."/>
            <person name="Lewis M."/>
            <person name="Utterback T."/>
            <person name="Feldblyum T."/>
            <person name="Zismann V."/>
            <person name="Iobst S."/>
            <person name="Hsiao J."/>
            <person name="de Vazeille A.R."/>
            <person name="Salzberg S.L."/>
            <person name="White O."/>
            <person name="Fraser C.M."/>
            <person name="Yu Y."/>
            <person name="Kim H."/>
            <person name="Rambo T."/>
            <person name="Currie J."/>
            <person name="Collura K."/>
            <person name="Kernodle-Thompson S."/>
            <person name="Wei F."/>
            <person name="Kudrna K."/>
            <person name="Ammiraju J.S.S."/>
            <person name="Luo M."/>
            <person name="Goicoechea J.L."/>
            <person name="Wing R.A."/>
            <person name="Henry D."/>
            <person name="Oates R."/>
            <person name="Palmer M."/>
            <person name="Pries G."/>
            <person name="Saski C."/>
            <person name="Simmons J."/>
            <person name="Soderlund C."/>
            <person name="Nelson W."/>
            <person name="de la Bastide M."/>
            <person name="Spiegel L."/>
            <person name="Nascimento L."/>
            <person name="Huang E."/>
            <person name="Preston R."/>
            <person name="Zutavern T."/>
            <person name="Palmer L."/>
            <person name="O'Shaughnessy A."/>
            <person name="Dike S."/>
            <person name="McCombie W.R."/>
            <person name="Minx P."/>
            <person name="Cordum H."/>
            <person name="Wilson R."/>
            <person name="Jin W."/>
            <person name="Lee H.R."/>
            <person name="Jiang J."/>
            <person name="Jackson S."/>
        </authorList>
    </citation>
    <scope>NUCLEOTIDE SEQUENCE [LARGE SCALE GENOMIC DNA]</scope>
    <source>
        <strain>cv. Nipponbare</strain>
    </source>
</reference>
<reference key="2">
    <citation type="journal article" date="2005" name="Nature">
        <title>The map-based sequence of the rice genome.</title>
        <authorList>
            <consortium name="International rice genome sequencing project (IRGSP)"/>
        </authorList>
    </citation>
    <scope>NUCLEOTIDE SEQUENCE [LARGE SCALE GENOMIC DNA]</scope>
    <source>
        <strain>cv. Nipponbare</strain>
    </source>
</reference>
<reference key="3">
    <citation type="journal article" date="2008" name="Nucleic Acids Res.">
        <title>The rice annotation project database (RAP-DB): 2008 update.</title>
        <authorList>
            <consortium name="The rice annotation project (RAP)"/>
        </authorList>
    </citation>
    <scope>GENOME REANNOTATION</scope>
    <source>
        <strain>cv. Nipponbare</strain>
    </source>
</reference>
<reference key="4">
    <citation type="journal article" date="2013" name="Rice">
        <title>Improvement of the Oryza sativa Nipponbare reference genome using next generation sequence and optical map data.</title>
        <authorList>
            <person name="Kawahara Y."/>
            <person name="de la Bastide M."/>
            <person name="Hamilton J.P."/>
            <person name="Kanamori H."/>
            <person name="McCombie W.R."/>
            <person name="Ouyang S."/>
            <person name="Schwartz D.C."/>
            <person name="Tanaka T."/>
            <person name="Wu J."/>
            <person name="Zhou S."/>
            <person name="Childs K.L."/>
            <person name="Davidson R.M."/>
            <person name="Lin H."/>
            <person name="Quesada-Ocampo L."/>
            <person name="Vaillancourt B."/>
            <person name="Sakai H."/>
            <person name="Lee S.S."/>
            <person name="Kim J."/>
            <person name="Numa H."/>
            <person name="Itoh T."/>
            <person name="Buell C.R."/>
            <person name="Matsumoto T."/>
        </authorList>
    </citation>
    <scope>GENOME REANNOTATION</scope>
    <source>
        <strain>cv. Nipponbare</strain>
    </source>
</reference>
<reference key="5">
    <citation type="journal article" date="2005" name="PLoS Biol.">
        <title>The genomes of Oryza sativa: a history of duplications.</title>
        <authorList>
            <person name="Yu J."/>
            <person name="Wang J."/>
            <person name="Lin W."/>
            <person name="Li S."/>
            <person name="Li H."/>
            <person name="Zhou J."/>
            <person name="Ni P."/>
            <person name="Dong W."/>
            <person name="Hu S."/>
            <person name="Zeng C."/>
            <person name="Zhang J."/>
            <person name="Zhang Y."/>
            <person name="Li R."/>
            <person name="Xu Z."/>
            <person name="Li S."/>
            <person name="Li X."/>
            <person name="Zheng H."/>
            <person name="Cong L."/>
            <person name="Lin L."/>
            <person name="Yin J."/>
            <person name="Geng J."/>
            <person name="Li G."/>
            <person name="Shi J."/>
            <person name="Liu J."/>
            <person name="Lv H."/>
            <person name="Li J."/>
            <person name="Wang J."/>
            <person name="Deng Y."/>
            <person name="Ran L."/>
            <person name="Shi X."/>
            <person name="Wang X."/>
            <person name="Wu Q."/>
            <person name="Li C."/>
            <person name="Ren X."/>
            <person name="Wang J."/>
            <person name="Wang X."/>
            <person name="Li D."/>
            <person name="Liu D."/>
            <person name="Zhang X."/>
            <person name="Ji Z."/>
            <person name="Zhao W."/>
            <person name="Sun Y."/>
            <person name="Zhang Z."/>
            <person name="Bao J."/>
            <person name="Han Y."/>
            <person name="Dong L."/>
            <person name="Ji J."/>
            <person name="Chen P."/>
            <person name="Wu S."/>
            <person name="Liu J."/>
            <person name="Xiao Y."/>
            <person name="Bu D."/>
            <person name="Tan J."/>
            <person name="Yang L."/>
            <person name="Ye C."/>
            <person name="Zhang J."/>
            <person name="Xu J."/>
            <person name="Zhou Y."/>
            <person name="Yu Y."/>
            <person name="Zhang B."/>
            <person name="Zhuang S."/>
            <person name="Wei H."/>
            <person name="Liu B."/>
            <person name="Lei M."/>
            <person name="Yu H."/>
            <person name="Li Y."/>
            <person name="Xu H."/>
            <person name="Wei S."/>
            <person name="He X."/>
            <person name="Fang L."/>
            <person name="Zhang Z."/>
            <person name="Zhang Y."/>
            <person name="Huang X."/>
            <person name="Su Z."/>
            <person name="Tong W."/>
            <person name="Li J."/>
            <person name="Tong Z."/>
            <person name="Li S."/>
            <person name="Ye J."/>
            <person name="Wang L."/>
            <person name="Fang L."/>
            <person name="Lei T."/>
            <person name="Chen C.-S."/>
            <person name="Chen H.-C."/>
            <person name="Xu Z."/>
            <person name="Li H."/>
            <person name="Huang H."/>
            <person name="Zhang F."/>
            <person name="Xu H."/>
            <person name="Li N."/>
            <person name="Zhao C."/>
            <person name="Li S."/>
            <person name="Dong L."/>
            <person name="Huang Y."/>
            <person name="Li L."/>
            <person name="Xi Y."/>
            <person name="Qi Q."/>
            <person name="Li W."/>
            <person name="Zhang B."/>
            <person name="Hu W."/>
            <person name="Zhang Y."/>
            <person name="Tian X."/>
            <person name="Jiao Y."/>
            <person name="Liang X."/>
            <person name="Jin J."/>
            <person name="Gao L."/>
            <person name="Zheng W."/>
            <person name="Hao B."/>
            <person name="Liu S.-M."/>
            <person name="Wang W."/>
            <person name="Yuan L."/>
            <person name="Cao M."/>
            <person name="McDermott J."/>
            <person name="Samudrala R."/>
            <person name="Wang J."/>
            <person name="Wong G.K.-S."/>
            <person name="Yang H."/>
        </authorList>
    </citation>
    <scope>NUCLEOTIDE SEQUENCE [LARGE SCALE GENOMIC DNA]</scope>
    <source>
        <strain>cv. Nipponbare</strain>
    </source>
</reference>
<reference key="6">
    <citation type="journal article" date="2003" name="Science">
        <title>Collection, mapping, and annotation of over 28,000 cDNA clones from japonica rice.</title>
        <authorList>
            <consortium name="The rice full-length cDNA consortium"/>
        </authorList>
    </citation>
    <scope>NUCLEOTIDE SEQUENCE [LARGE SCALE MRNA]</scope>
    <source>
        <strain>cv. Nipponbare</strain>
    </source>
</reference>
<dbReference type="EC" id="2.3.2.27" evidence="3"/>
<dbReference type="EMBL" id="AC138001">
    <property type="protein sequence ID" value="AAP68394.1"/>
    <property type="molecule type" value="Genomic_DNA"/>
</dbReference>
<dbReference type="EMBL" id="AC145381">
    <property type="protein sequence ID" value="AAX95534.1"/>
    <property type="molecule type" value="Genomic_DNA"/>
</dbReference>
<dbReference type="EMBL" id="DP000009">
    <property type="protein sequence ID" value="ABF97919.1"/>
    <property type="molecule type" value="Genomic_DNA"/>
</dbReference>
<dbReference type="EMBL" id="AP008209">
    <property type="protein sequence ID" value="BAF12702.1"/>
    <property type="molecule type" value="Genomic_DNA"/>
</dbReference>
<dbReference type="EMBL" id="AP014959">
    <property type="protein sequence ID" value="BAS85515.1"/>
    <property type="molecule type" value="Genomic_DNA"/>
</dbReference>
<dbReference type="EMBL" id="CM000140">
    <property type="protein sequence ID" value="EAZ27964.1"/>
    <property type="molecule type" value="Genomic_DNA"/>
</dbReference>
<dbReference type="EMBL" id="AK103022">
    <property type="status" value="NOT_ANNOTATED_CDS"/>
    <property type="molecule type" value="mRNA"/>
</dbReference>
<dbReference type="RefSeq" id="XP_015631498.1">
    <property type="nucleotide sequence ID" value="XM_015776012.1"/>
</dbReference>
<dbReference type="RefSeq" id="XP_015631499.1">
    <property type="nucleotide sequence ID" value="XM_015776013.1"/>
</dbReference>
<dbReference type="SMR" id="Q7XZZ3"/>
<dbReference type="FunCoup" id="Q7XZZ3">
    <property type="interactions" value="6"/>
</dbReference>
<dbReference type="STRING" id="39947.Q7XZZ3"/>
<dbReference type="PaxDb" id="39947-Q7XZZ3"/>
<dbReference type="EnsemblPlants" id="Os03t0650900-01">
    <property type="protein sequence ID" value="Os03t0650900-01"/>
    <property type="gene ID" value="Os03g0650900"/>
</dbReference>
<dbReference type="GeneID" id="4333590"/>
<dbReference type="Gramene" id="Os03t0650900-01">
    <property type="protein sequence ID" value="Os03t0650900-01"/>
    <property type="gene ID" value="Os03g0650900"/>
</dbReference>
<dbReference type="KEGG" id="dosa:Os03g0650900"/>
<dbReference type="KEGG" id="osa:4333590"/>
<dbReference type="eggNOG" id="ENOG502QQHB">
    <property type="taxonomic scope" value="Eukaryota"/>
</dbReference>
<dbReference type="HOGENOM" id="CLU_058131_0_0_1"/>
<dbReference type="InParanoid" id="Q7XZZ3"/>
<dbReference type="OMA" id="LCQCQSC"/>
<dbReference type="OrthoDB" id="6105938at2759"/>
<dbReference type="UniPathway" id="UPA00143"/>
<dbReference type="Proteomes" id="UP000000763">
    <property type="component" value="Chromosome 3"/>
</dbReference>
<dbReference type="Proteomes" id="UP000007752">
    <property type="component" value="Chromosome 3"/>
</dbReference>
<dbReference type="Proteomes" id="UP000059680">
    <property type="component" value="Chromosome 3"/>
</dbReference>
<dbReference type="GO" id="GO:0016740">
    <property type="term" value="F:transferase activity"/>
    <property type="evidence" value="ECO:0007669"/>
    <property type="project" value="UniProtKB-KW"/>
</dbReference>
<dbReference type="GO" id="GO:0008270">
    <property type="term" value="F:zinc ion binding"/>
    <property type="evidence" value="ECO:0007669"/>
    <property type="project" value="UniProtKB-KW"/>
</dbReference>
<dbReference type="GO" id="GO:0016567">
    <property type="term" value="P:protein ubiquitination"/>
    <property type="evidence" value="ECO:0007669"/>
    <property type="project" value="UniProtKB-UniPathway"/>
</dbReference>
<dbReference type="CDD" id="cd23127">
    <property type="entry name" value="RING-HC_BAH1-like"/>
    <property type="match status" value="1"/>
</dbReference>
<dbReference type="CDD" id="cd14482">
    <property type="entry name" value="SPX_BAH1-like"/>
    <property type="match status" value="1"/>
</dbReference>
<dbReference type="Gene3D" id="3.30.40.10">
    <property type="entry name" value="Zinc/RING finger domain, C3HC4 (zinc finger)"/>
    <property type="match status" value="1"/>
</dbReference>
<dbReference type="InterPro" id="IPR033326">
    <property type="entry name" value="BAH1"/>
</dbReference>
<dbReference type="InterPro" id="IPR004331">
    <property type="entry name" value="SPX_dom"/>
</dbReference>
<dbReference type="InterPro" id="IPR027370">
    <property type="entry name" value="Znf-RING_euk"/>
</dbReference>
<dbReference type="InterPro" id="IPR001841">
    <property type="entry name" value="Znf_RING"/>
</dbReference>
<dbReference type="InterPro" id="IPR013083">
    <property type="entry name" value="Znf_RING/FYVE/PHD"/>
</dbReference>
<dbReference type="InterPro" id="IPR017907">
    <property type="entry name" value="Znf_RING_CS"/>
</dbReference>
<dbReference type="PANTHER" id="PTHR46764">
    <property type="entry name" value="E3 UBIQUITIN-PROTEIN LIGASE BAH1"/>
    <property type="match status" value="1"/>
</dbReference>
<dbReference type="PANTHER" id="PTHR46764:SF2">
    <property type="entry name" value="E3 UBIQUITIN-PROTEIN LIGASE BAH1-LIKE-RELATED"/>
    <property type="match status" value="1"/>
</dbReference>
<dbReference type="Pfam" id="PF13445">
    <property type="entry name" value="zf-RING_UBOX"/>
    <property type="match status" value="1"/>
</dbReference>
<dbReference type="SMART" id="SM00184">
    <property type="entry name" value="RING"/>
    <property type="match status" value="1"/>
</dbReference>
<dbReference type="SUPFAM" id="SSF57850">
    <property type="entry name" value="RING/U-box"/>
    <property type="match status" value="1"/>
</dbReference>
<dbReference type="PROSITE" id="PS51382">
    <property type="entry name" value="SPX"/>
    <property type="match status" value="1"/>
</dbReference>
<dbReference type="PROSITE" id="PS00518">
    <property type="entry name" value="ZF_RING_1"/>
    <property type="match status" value="1"/>
</dbReference>
<dbReference type="PROSITE" id="PS50089">
    <property type="entry name" value="ZF_RING_2"/>
    <property type="match status" value="1"/>
</dbReference>
<feature type="chain" id="PRO_0000398779" description="Probable E3 ubiquitin-protein ligase BAH1-like 1">
    <location>
        <begin position="1"/>
        <end position="339"/>
    </location>
</feature>
<feature type="domain" description="SPX" evidence="2">
    <location>
        <begin position="1"/>
        <end position="163"/>
    </location>
</feature>
<feature type="zinc finger region" description="RING-type" evidence="1">
    <location>
        <begin position="235"/>
        <end position="284"/>
    </location>
</feature>
<feature type="sequence conflict" description="In Ref. 6; AK103022." evidence="3" ref="6">
    <original>D</original>
    <variation>G</variation>
    <location>
        <position position="240"/>
    </location>
</feature>
<accession>Q7XZZ3</accession>
<accession>A0A0P0W0X0</accession>
<proteinExistence type="evidence at transcript level"/>
<gene>
    <name type="ordered locus">Os03g0650900</name>
    <name type="ordered locus">LOC_Os03g44810</name>
    <name type="ORF">OsJ_11925</name>
    <name type="ORF">OSJNBa0093M23.3</name>
</gene>
<evidence type="ECO:0000255" key="1">
    <source>
        <dbReference type="PROSITE-ProRule" id="PRU00175"/>
    </source>
</evidence>
<evidence type="ECO:0000255" key="2">
    <source>
        <dbReference type="PROSITE-ProRule" id="PRU00714"/>
    </source>
</evidence>
<evidence type="ECO:0000305" key="3"/>